<protein>
    <recommendedName>
        <fullName evidence="1">Peptide chain release factor 1</fullName>
        <shortName evidence="1">RF-1</shortName>
    </recommendedName>
</protein>
<sequence length="359" mass="40599">MSFEDSLEGLCEKFRILKQQLSDPESLGVQAFVVASREYSDLLPIMSLIEEYQTAQKEIEELEGLINSTDTDAELVHLAREELYTKQKLIPKLKHQLQLSLLPKDKDDSRSAILEIRAGTGGEEAALFVCDLYRMYIKYAERKSWKVEPIGISTTGIGGYKEASLCIGGKDVFARLKFESGVHRVQRVPETESSGRLHTSAATVAVLPEVEEVDLKIDEKDLRIDVYRSSGPGGQSVNTTDSAVRITHIPTGIVVIQQDEKSQHKNKSKALKVLRARLYNLEKQKIEDEISKMRKSQIGSGDRSERIRTYNFLQSRITDHRINMTLYRLEHIMKEGDLDEFVDALIADDQANKLQQISS</sequence>
<name>RF1_ANAMF</name>
<reference key="1">
    <citation type="journal article" date="2009" name="BMC Genomics">
        <title>Conservation in the face of diversity: multistrain analysis of an intracellular bacterium.</title>
        <authorList>
            <person name="Dark M.J."/>
            <person name="Herndon D.R."/>
            <person name="Kappmeyer L.S."/>
            <person name="Gonzales M.P."/>
            <person name="Nordeen E."/>
            <person name="Palmer G.H."/>
            <person name="Knowles D.P. Jr."/>
            <person name="Brayton K.A."/>
        </authorList>
    </citation>
    <scope>NUCLEOTIDE SEQUENCE [LARGE SCALE GENOMIC DNA]</scope>
    <source>
        <strain>Florida</strain>
    </source>
</reference>
<proteinExistence type="inferred from homology"/>
<keyword id="KW-0963">Cytoplasm</keyword>
<keyword id="KW-0488">Methylation</keyword>
<keyword id="KW-0648">Protein biosynthesis</keyword>
<keyword id="KW-1185">Reference proteome</keyword>
<accession>B9KIV2</accession>
<feature type="chain" id="PRO_1000193467" description="Peptide chain release factor 1">
    <location>
        <begin position="1"/>
        <end position="359"/>
    </location>
</feature>
<feature type="modified residue" description="N5-methylglutamine" evidence="1">
    <location>
        <position position="235"/>
    </location>
</feature>
<evidence type="ECO:0000255" key="1">
    <source>
        <dbReference type="HAMAP-Rule" id="MF_00093"/>
    </source>
</evidence>
<organism>
    <name type="scientific">Anaplasma marginale (strain Florida)</name>
    <dbReference type="NCBI Taxonomy" id="320483"/>
    <lineage>
        <taxon>Bacteria</taxon>
        <taxon>Pseudomonadati</taxon>
        <taxon>Pseudomonadota</taxon>
        <taxon>Alphaproteobacteria</taxon>
        <taxon>Rickettsiales</taxon>
        <taxon>Anaplasmataceae</taxon>
        <taxon>Anaplasma</taxon>
    </lineage>
</organism>
<dbReference type="EMBL" id="CP001079">
    <property type="protein sequence ID" value="ACM49414.1"/>
    <property type="molecule type" value="Genomic_DNA"/>
</dbReference>
<dbReference type="RefSeq" id="WP_010267814.1">
    <property type="nucleotide sequence ID" value="NZ_AFMS01000114.1"/>
</dbReference>
<dbReference type="SMR" id="B9KIV2"/>
<dbReference type="STRING" id="320483.AMF_568"/>
<dbReference type="GeneID" id="7398012"/>
<dbReference type="KEGG" id="amf:AMF_568"/>
<dbReference type="eggNOG" id="COG0216">
    <property type="taxonomic scope" value="Bacteria"/>
</dbReference>
<dbReference type="HOGENOM" id="CLU_036856_0_1_5"/>
<dbReference type="Proteomes" id="UP000007307">
    <property type="component" value="Chromosome"/>
</dbReference>
<dbReference type="GO" id="GO:0005737">
    <property type="term" value="C:cytoplasm"/>
    <property type="evidence" value="ECO:0007669"/>
    <property type="project" value="UniProtKB-SubCell"/>
</dbReference>
<dbReference type="GO" id="GO:0016149">
    <property type="term" value="F:translation release factor activity, codon specific"/>
    <property type="evidence" value="ECO:0007669"/>
    <property type="project" value="UniProtKB-UniRule"/>
</dbReference>
<dbReference type="FunFam" id="3.30.160.20:FF:000004">
    <property type="entry name" value="Peptide chain release factor 1"/>
    <property type="match status" value="1"/>
</dbReference>
<dbReference type="FunFam" id="3.30.70.1660:FF:000002">
    <property type="entry name" value="Peptide chain release factor 1"/>
    <property type="match status" value="1"/>
</dbReference>
<dbReference type="FunFam" id="3.30.70.1660:FF:000004">
    <property type="entry name" value="Peptide chain release factor 1"/>
    <property type="match status" value="1"/>
</dbReference>
<dbReference type="Gene3D" id="3.30.160.20">
    <property type="match status" value="1"/>
</dbReference>
<dbReference type="Gene3D" id="3.30.70.1660">
    <property type="match status" value="1"/>
</dbReference>
<dbReference type="Gene3D" id="6.10.140.1950">
    <property type="match status" value="1"/>
</dbReference>
<dbReference type="HAMAP" id="MF_00093">
    <property type="entry name" value="Rel_fac_1"/>
    <property type="match status" value="1"/>
</dbReference>
<dbReference type="InterPro" id="IPR005139">
    <property type="entry name" value="PCRF"/>
</dbReference>
<dbReference type="InterPro" id="IPR000352">
    <property type="entry name" value="Pep_chain_release_fac_I"/>
</dbReference>
<dbReference type="InterPro" id="IPR045853">
    <property type="entry name" value="Pep_chain_release_fac_I_sf"/>
</dbReference>
<dbReference type="InterPro" id="IPR050057">
    <property type="entry name" value="Prokaryotic/Mito_RF"/>
</dbReference>
<dbReference type="InterPro" id="IPR004373">
    <property type="entry name" value="RF-1"/>
</dbReference>
<dbReference type="NCBIfam" id="TIGR00019">
    <property type="entry name" value="prfA"/>
    <property type="match status" value="1"/>
</dbReference>
<dbReference type="NCBIfam" id="NF001859">
    <property type="entry name" value="PRK00591.1"/>
    <property type="match status" value="1"/>
</dbReference>
<dbReference type="PANTHER" id="PTHR43804">
    <property type="entry name" value="LD18447P"/>
    <property type="match status" value="1"/>
</dbReference>
<dbReference type="PANTHER" id="PTHR43804:SF7">
    <property type="entry name" value="LD18447P"/>
    <property type="match status" value="1"/>
</dbReference>
<dbReference type="Pfam" id="PF03462">
    <property type="entry name" value="PCRF"/>
    <property type="match status" value="1"/>
</dbReference>
<dbReference type="Pfam" id="PF00472">
    <property type="entry name" value="RF-1"/>
    <property type="match status" value="1"/>
</dbReference>
<dbReference type="SMART" id="SM00937">
    <property type="entry name" value="PCRF"/>
    <property type="match status" value="1"/>
</dbReference>
<dbReference type="SUPFAM" id="SSF75620">
    <property type="entry name" value="Release factor"/>
    <property type="match status" value="1"/>
</dbReference>
<dbReference type="PROSITE" id="PS00745">
    <property type="entry name" value="RF_PROK_I"/>
    <property type="match status" value="1"/>
</dbReference>
<gene>
    <name evidence="1" type="primary">prfA</name>
    <name type="ordered locus">AMF_568</name>
</gene>
<comment type="function">
    <text evidence="1">Peptide chain release factor 1 directs the termination of translation in response to the peptide chain termination codons UAG and UAA.</text>
</comment>
<comment type="subcellular location">
    <subcellularLocation>
        <location evidence="1">Cytoplasm</location>
    </subcellularLocation>
</comment>
<comment type="PTM">
    <text evidence="1">Methylated by PrmC. Methylation increases the termination efficiency of RF1.</text>
</comment>
<comment type="similarity">
    <text evidence="1">Belongs to the prokaryotic/mitochondrial release factor family.</text>
</comment>